<keyword id="KW-1185">Reference proteome</keyword>
<protein>
    <recommendedName>
        <fullName>Uncharacterized protein YqxJ</fullName>
    </recommendedName>
    <alternativeName>
        <fullName>ORF5</fullName>
    </alternativeName>
</protein>
<organism>
    <name type="scientific">Bacillus subtilis (strain 168)</name>
    <dbReference type="NCBI Taxonomy" id="224308"/>
    <lineage>
        <taxon>Bacteria</taxon>
        <taxon>Bacillati</taxon>
        <taxon>Bacillota</taxon>
        <taxon>Bacilli</taxon>
        <taxon>Bacillales</taxon>
        <taxon>Bacillaceae</taxon>
        <taxon>Bacillus</taxon>
    </lineage>
</organism>
<name>YQXJ_BACSU</name>
<dbReference type="EMBL" id="M59232">
    <property type="protein sequence ID" value="AAA62678.1"/>
    <property type="molecule type" value="Genomic_DNA"/>
</dbReference>
<dbReference type="EMBL" id="D32216">
    <property type="protein sequence ID" value="BAA06962.1"/>
    <property type="molecule type" value="Genomic_DNA"/>
</dbReference>
<dbReference type="EMBL" id="D84432">
    <property type="protein sequence ID" value="BAA12426.1"/>
    <property type="molecule type" value="Genomic_DNA"/>
</dbReference>
<dbReference type="EMBL" id="AL009126">
    <property type="protein sequence ID" value="CAB14529.1"/>
    <property type="molecule type" value="Genomic_DNA"/>
</dbReference>
<dbReference type="PIR" id="D69968">
    <property type="entry name" value="D69968"/>
</dbReference>
<dbReference type="RefSeq" id="NP_390465.1">
    <property type="nucleotide sequence ID" value="NC_000964.3"/>
</dbReference>
<dbReference type="RefSeq" id="WP_003229947.1">
    <property type="nucleotide sequence ID" value="NZ_OZ025638.1"/>
</dbReference>
<dbReference type="SMR" id="P24809"/>
<dbReference type="FunCoup" id="P24809">
    <property type="interactions" value="23"/>
</dbReference>
<dbReference type="STRING" id="224308.BSU25880"/>
<dbReference type="PaxDb" id="224308-BSU25880"/>
<dbReference type="EnsemblBacteria" id="CAB14529">
    <property type="protein sequence ID" value="CAB14529"/>
    <property type="gene ID" value="BSU_25880"/>
</dbReference>
<dbReference type="GeneID" id="937786"/>
<dbReference type="KEGG" id="bsu:BSU25880"/>
<dbReference type="PATRIC" id="fig|224308.179.peg.2813"/>
<dbReference type="eggNOG" id="ENOG502ZEVX">
    <property type="taxonomic scope" value="Bacteria"/>
</dbReference>
<dbReference type="InParanoid" id="P24809"/>
<dbReference type="OrthoDB" id="9866880at2"/>
<dbReference type="BioCyc" id="BSUB:BSU25880-MONOMER"/>
<dbReference type="Proteomes" id="UP000001570">
    <property type="component" value="Chromosome"/>
</dbReference>
<dbReference type="Gene3D" id="1.10.3750.10">
    <property type="entry name" value="YhaI-like"/>
    <property type="match status" value="1"/>
</dbReference>
<dbReference type="InterPro" id="IPR035945">
    <property type="entry name" value="YhaI-like_sf"/>
</dbReference>
<reference key="1">
    <citation type="journal article" date="1991" name="J. Gen. Microbiol.">
        <title>Cloning, expression, sequence analysis and biochemical characterization of an autolytic amidase of Bacillus subtilis 168 trpC2.</title>
        <authorList>
            <person name="Foster S.J."/>
        </authorList>
    </citation>
    <scope>NUCLEOTIDE SEQUENCE [GENOMIC DNA]</scope>
    <source>
        <strain>168</strain>
    </source>
</reference>
<reference key="2">
    <citation type="journal article" date="1995" name="Microbiology">
        <title>Complete nucleotide sequence of a skin element excised by DNA rearrangement during sporulation in Bacillus subtilis.</title>
        <authorList>
            <person name="Takemaru K."/>
            <person name="Mizuno M."/>
            <person name="Sato T."/>
            <person name="Takeuchi M."/>
            <person name="Kobayashi Y."/>
        </authorList>
    </citation>
    <scope>NUCLEOTIDE SEQUENCE [GENOMIC DNA]</scope>
    <source>
        <strain>168 / JH642</strain>
    </source>
</reference>
<reference key="3">
    <citation type="journal article" date="1996" name="Microbiology">
        <title>Systematic sequencing of the 283 kb 210 degrees-232 degrees region of the Bacillus subtilis genome containing the skin element and many sporulation genes.</title>
        <authorList>
            <person name="Mizuno M."/>
            <person name="Masuda S."/>
            <person name="Takemaru K."/>
            <person name="Hosono S."/>
            <person name="Sato T."/>
            <person name="Takeuchi M."/>
            <person name="Kobayashi Y."/>
        </authorList>
    </citation>
    <scope>NUCLEOTIDE SEQUENCE [GENOMIC DNA]</scope>
    <source>
        <strain>168 / JH642</strain>
    </source>
</reference>
<reference key="4">
    <citation type="journal article" date="1997" name="Nature">
        <title>The complete genome sequence of the Gram-positive bacterium Bacillus subtilis.</title>
        <authorList>
            <person name="Kunst F."/>
            <person name="Ogasawara N."/>
            <person name="Moszer I."/>
            <person name="Albertini A.M."/>
            <person name="Alloni G."/>
            <person name="Azevedo V."/>
            <person name="Bertero M.G."/>
            <person name="Bessieres P."/>
            <person name="Bolotin A."/>
            <person name="Borchert S."/>
            <person name="Borriss R."/>
            <person name="Boursier L."/>
            <person name="Brans A."/>
            <person name="Braun M."/>
            <person name="Brignell S.C."/>
            <person name="Bron S."/>
            <person name="Brouillet S."/>
            <person name="Bruschi C.V."/>
            <person name="Caldwell B."/>
            <person name="Capuano V."/>
            <person name="Carter N.M."/>
            <person name="Choi S.-K."/>
            <person name="Codani J.-J."/>
            <person name="Connerton I.F."/>
            <person name="Cummings N.J."/>
            <person name="Daniel R.A."/>
            <person name="Denizot F."/>
            <person name="Devine K.M."/>
            <person name="Duesterhoeft A."/>
            <person name="Ehrlich S.D."/>
            <person name="Emmerson P.T."/>
            <person name="Entian K.-D."/>
            <person name="Errington J."/>
            <person name="Fabret C."/>
            <person name="Ferrari E."/>
            <person name="Foulger D."/>
            <person name="Fritz C."/>
            <person name="Fujita M."/>
            <person name="Fujita Y."/>
            <person name="Fuma S."/>
            <person name="Galizzi A."/>
            <person name="Galleron N."/>
            <person name="Ghim S.-Y."/>
            <person name="Glaser P."/>
            <person name="Goffeau A."/>
            <person name="Golightly E.J."/>
            <person name="Grandi G."/>
            <person name="Guiseppi G."/>
            <person name="Guy B.J."/>
            <person name="Haga K."/>
            <person name="Haiech J."/>
            <person name="Harwood C.R."/>
            <person name="Henaut A."/>
            <person name="Hilbert H."/>
            <person name="Holsappel S."/>
            <person name="Hosono S."/>
            <person name="Hullo M.-F."/>
            <person name="Itaya M."/>
            <person name="Jones L.-M."/>
            <person name="Joris B."/>
            <person name="Karamata D."/>
            <person name="Kasahara Y."/>
            <person name="Klaerr-Blanchard M."/>
            <person name="Klein C."/>
            <person name="Kobayashi Y."/>
            <person name="Koetter P."/>
            <person name="Koningstein G."/>
            <person name="Krogh S."/>
            <person name="Kumano M."/>
            <person name="Kurita K."/>
            <person name="Lapidus A."/>
            <person name="Lardinois S."/>
            <person name="Lauber J."/>
            <person name="Lazarevic V."/>
            <person name="Lee S.-M."/>
            <person name="Levine A."/>
            <person name="Liu H."/>
            <person name="Masuda S."/>
            <person name="Mauel C."/>
            <person name="Medigue C."/>
            <person name="Medina N."/>
            <person name="Mellado R.P."/>
            <person name="Mizuno M."/>
            <person name="Moestl D."/>
            <person name="Nakai S."/>
            <person name="Noback M."/>
            <person name="Noone D."/>
            <person name="O'Reilly M."/>
            <person name="Ogawa K."/>
            <person name="Ogiwara A."/>
            <person name="Oudega B."/>
            <person name="Park S.-H."/>
            <person name="Parro V."/>
            <person name="Pohl T.M."/>
            <person name="Portetelle D."/>
            <person name="Porwollik S."/>
            <person name="Prescott A.M."/>
            <person name="Presecan E."/>
            <person name="Pujic P."/>
            <person name="Purnelle B."/>
            <person name="Rapoport G."/>
            <person name="Rey M."/>
            <person name="Reynolds S."/>
            <person name="Rieger M."/>
            <person name="Rivolta C."/>
            <person name="Rocha E."/>
            <person name="Roche B."/>
            <person name="Rose M."/>
            <person name="Sadaie Y."/>
            <person name="Sato T."/>
            <person name="Scanlan E."/>
            <person name="Schleich S."/>
            <person name="Schroeter R."/>
            <person name="Scoffone F."/>
            <person name="Sekiguchi J."/>
            <person name="Sekowska A."/>
            <person name="Seror S.J."/>
            <person name="Serror P."/>
            <person name="Shin B.-S."/>
            <person name="Soldo B."/>
            <person name="Sorokin A."/>
            <person name="Tacconi E."/>
            <person name="Takagi T."/>
            <person name="Takahashi H."/>
            <person name="Takemaru K."/>
            <person name="Takeuchi M."/>
            <person name="Tamakoshi A."/>
            <person name="Tanaka T."/>
            <person name="Terpstra P."/>
            <person name="Tognoni A."/>
            <person name="Tosato V."/>
            <person name="Uchiyama S."/>
            <person name="Vandenbol M."/>
            <person name="Vannier F."/>
            <person name="Vassarotti A."/>
            <person name="Viari A."/>
            <person name="Wambutt R."/>
            <person name="Wedler E."/>
            <person name="Wedler H."/>
            <person name="Weitzenegger T."/>
            <person name="Winters P."/>
            <person name="Wipat A."/>
            <person name="Yamamoto H."/>
            <person name="Yamane K."/>
            <person name="Yasumoto K."/>
            <person name="Yata K."/>
            <person name="Yoshida K."/>
            <person name="Yoshikawa H.-F."/>
            <person name="Zumstein E."/>
            <person name="Yoshikawa H."/>
            <person name="Danchin A."/>
        </authorList>
    </citation>
    <scope>NUCLEOTIDE SEQUENCE [LARGE SCALE GENOMIC DNA]</scope>
    <source>
        <strain>168</strain>
    </source>
</reference>
<sequence length="120" mass="14341">MVTVEERLDNLEKKVEKQAFQLRLVQQLAADYDRFGLFDQVLAYDLSEKQYQELRELTSQYTDKIKNGEEVSLHNFTEEFKRILKDIEKEVDFEKFISLWLKGPEEGFGFSKALHNHFFN</sequence>
<feature type="chain" id="PRO_0000049848" description="Uncharacterized protein YqxJ">
    <location>
        <begin position="1"/>
        <end position="120"/>
    </location>
</feature>
<proteinExistence type="predicted"/>
<accession>P24809</accession>
<gene>
    <name type="primary">yqxJ</name>
    <name type="synonym">yqdF</name>
    <name type="ordered locus">BSU25880</name>
</gene>